<comment type="function">
    <text evidence="1">An aminoacyl-tRNA editing enzyme that deacylates mischarged D-aminoacyl-tRNAs. Also deacylates mischarged glycyl-tRNA(Ala), protecting cells against glycine mischarging by AlaRS. Acts via tRNA-based rather than protein-based catalysis; rejects L-amino acids rather than detecting D-amino acids in the active site. By recycling D-aminoacyl-tRNA to D-amino acids and free tRNA molecules, this enzyme counteracts the toxicity associated with the formation of D-aminoacyl-tRNA entities in vivo and helps enforce protein L-homochirality.</text>
</comment>
<comment type="catalytic activity">
    <reaction evidence="1">
        <text>glycyl-tRNA(Ala) + H2O = tRNA(Ala) + glycine + H(+)</text>
        <dbReference type="Rhea" id="RHEA:53744"/>
        <dbReference type="Rhea" id="RHEA-COMP:9657"/>
        <dbReference type="Rhea" id="RHEA-COMP:13640"/>
        <dbReference type="ChEBI" id="CHEBI:15377"/>
        <dbReference type="ChEBI" id="CHEBI:15378"/>
        <dbReference type="ChEBI" id="CHEBI:57305"/>
        <dbReference type="ChEBI" id="CHEBI:78442"/>
        <dbReference type="ChEBI" id="CHEBI:78522"/>
        <dbReference type="EC" id="3.1.1.96"/>
    </reaction>
</comment>
<comment type="catalytic activity">
    <reaction evidence="1">
        <text>a D-aminoacyl-tRNA + H2O = a tRNA + a D-alpha-amino acid + H(+)</text>
        <dbReference type="Rhea" id="RHEA:13953"/>
        <dbReference type="Rhea" id="RHEA-COMP:10123"/>
        <dbReference type="Rhea" id="RHEA-COMP:10124"/>
        <dbReference type="ChEBI" id="CHEBI:15377"/>
        <dbReference type="ChEBI" id="CHEBI:15378"/>
        <dbReference type="ChEBI" id="CHEBI:59871"/>
        <dbReference type="ChEBI" id="CHEBI:78442"/>
        <dbReference type="ChEBI" id="CHEBI:79333"/>
        <dbReference type="EC" id="3.1.1.96"/>
    </reaction>
</comment>
<comment type="subunit">
    <text evidence="1">Homodimer.</text>
</comment>
<comment type="subcellular location">
    <subcellularLocation>
        <location evidence="1">Cytoplasm</location>
    </subcellularLocation>
</comment>
<comment type="domain">
    <text evidence="1">A Gly-cisPro motif from one monomer fits into the active site of the other monomer to allow specific chiral rejection of L-amino acids.</text>
</comment>
<comment type="similarity">
    <text evidence="1">Belongs to the DTD family.</text>
</comment>
<proteinExistence type="inferred from homology"/>
<reference key="1">
    <citation type="journal article" date="2008" name="BMC Genomics">
        <title>Genomics of an extreme psychrophile, Psychromonas ingrahamii.</title>
        <authorList>
            <person name="Riley M."/>
            <person name="Staley J.T."/>
            <person name="Danchin A."/>
            <person name="Wang T.Z."/>
            <person name="Brettin T.S."/>
            <person name="Hauser L.J."/>
            <person name="Land M.L."/>
            <person name="Thompson L.S."/>
        </authorList>
    </citation>
    <scope>NUCLEOTIDE SEQUENCE [LARGE SCALE GENOMIC DNA]</scope>
    <source>
        <strain>DSM 17664 / CCUG 51855 / 37</strain>
    </source>
</reference>
<gene>
    <name evidence="1" type="primary">dtd</name>
    <name type="ordered locus">Ping_3481</name>
</gene>
<dbReference type="EC" id="3.1.1.96" evidence="1"/>
<dbReference type="EMBL" id="CP000510">
    <property type="protein sequence ID" value="ABM05164.1"/>
    <property type="molecule type" value="Genomic_DNA"/>
</dbReference>
<dbReference type="RefSeq" id="WP_011771716.1">
    <property type="nucleotide sequence ID" value="NC_008709.1"/>
</dbReference>
<dbReference type="SMR" id="A1T099"/>
<dbReference type="STRING" id="357804.Ping_3481"/>
<dbReference type="KEGG" id="pin:Ping_3481"/>
<dbReference type="eggNOG" id="COG1490">
    <property type="taxonomic scope" value="Bacteria"/>
</dbReference>
<dbReference type="HOGENOM" id="CLU_076901_1_1_6"/>
<dbReference type="OrthoDB" id="9801395at2"/>
<dbReference type="Proteomes" id="UP000000639">
    <property type="component" value="Chromosome"/>
</dbReference>
<dbReference type="GO" id="GO:0005737">
    <property type="term" value="C:cytoplasm"/>
    <property type="evidence" value="ECO:0007669"/>
    <property type="project" value="UniProtKB-SubCell"/>
</dbReference>
<dbReference type="GO" id="GO:0051500">
    <property type="term" value="F:D-tyrosyl-tRNA(Tyr) deacylase activity"/>
    <property type="evidence" value="ECO:0007669"/>
    <property type="project" value="TreeGrafter"/>
</dbReference>
<dbReference type="GO" id="GO:0106026">
    <property type="term" value="F:Gly-tRNA(Ala) deacylase activity"/>
    <property type="evidence" value="ECO:0007669"/>
    <property type="project" value="UniProtKB-UniRule"/>
</dbReference>
<dbReference type="GO" id="GO:0043908">
    <property type="term" value="F:Ser(Gly)-tRNA(Ala) hydrolase activity"/>
    <property type="evidence" value="ECO:0007669"/>
    <property type="project" value="UniProtKB-UniRule"/>
</dbReference>
<dbReference type="GO" id="GO:0000049">
    <property type="term" value="F:tRNA binding"/>
    <property type="evidence" value="ECO:0007669"/>
    <property type="project" value="UniProtKB-UniRule"/>
</dbReference>
<dbReference type="GO" id="GO:0019478">
    <property type="term" value="P:D-amino acid catabolic process"/>
    <property type="evidence" value="ECO:0007669"/>
    <property type="project" value="UniProtKB-UniRule"/>
</dbReference>
<dbReference type="CDD" id="cd00563">
    <property type="entry name" value="Dtyr_deacylase"/>
    <property type="match status" value="1"/>
</dbReference>
<dbReference type="FunFam" id="3.50.80.10:FF:000001">
    <property type="entry name" value="D-aminoacyl-tRNA deacylase"/>
    <property type="match status" value="1"/>
</dbReference>
<dbReference type="Gene3D" id="3.50.80.10">
    <property type="entry name" value="D-tyrosyl-tRNA(Tyr) deacylase"/>
    <property type="match status" value="1"/>
</dbReference>
<dbReference type="HAMAP" id="MF_00518">
    <property type="entry name" value="Deacylase_Dtd"/>
    <property type="match status" value="1"/>
</dbReference>
<dbReference type="InterPro" id="IPR003732">
    <property type="entry name" value="Daa-tRNA_deacyls_DTD"/>
</dbReference>
<dbReference type="InterPro" id="IPR023509">
    <property type="entry name" value="DTD-like_sf"/>
</dbReference>
<dbReference type="NCBIfam" id="TIGR00256">
    <property type="entry name" value="D-aminoacyl-tRNA deacylase"/>
    <property type="match status" value="1"/>
</dbReference>
<dbReference type="PANTHER" id="PTHR10472:SF5">
    <property type="entry name" value="D-AMINOACYL-TRNA DEACYLASE 1"/>
    <property type="match status" value="1"/>
</dbReference>
<dbReference type="PANTHER" id="PTHR10472">
    <property type="entry name" value="D-TYROSYL-TRNA TYR DEACYLASE"/>
    <property type="match status" value="1"/>
</dbReference>
<dbReference type="Pfam" id="PF02580">
    <property type="entry name" value="Tyr_Deacylase"/>
    <property type="match status" value="1"/>
</dbReference>
<dbReference type="SUPFAM" id="SSF69500">
    <property type="entry name" value="DTD-like"/>
    <property type="match status" value="1"/>
</dbReference>
<organism>
    <name type="scientific">Psychromonas ingrahamii (strain DSM 17664 / CCUG 51855 / 37)</name>
    <dbReference type="NCBI Taxonomy" id="357804"/>
    <lineage>
        <taxon>Bacteria</taxon>
        <taxon>Pseudomonadati</taxon>
        <taxon>Pseudomonadota</taxon>
        <taxon>Gammaproteobacteria</taxon>
        <taxon>Alteromonadales</taxon>
        <taxon>Psychromonadaceae</taxon>
        <taxon>Psychromonas</taxon>
    </lineage>
</organism>
<accession>A1T099</accession>
<keyword id="KW-0963">Cytoplasm</keyword>
<keyword id="KW-0378">Hydrolase</keyword>
<keyword id="KW-1185">Reference proteome</keyword>
<keyword id="KW-0694">RNA-binding</keyword>
<keyword id="KW-0820">tRNA-binding</keyword>
<name>DTD_PSYIN</name>
<feature type="chain" id="PRO_1000050875" description="D-aminoacyl-tRNA deacylase">
    <location>
        <begin position="1"/>
        <end position="145"/>
    </location>
</feature>
<feature type="short sequence motif" description="Gly-cisPro motif, important for rejection of L-amino acids" evidence="1">
    <location>
        <begin position="137"/>
        <end position="138"/>
    </location>
</feature>
<evidence type="ECO:0000255" key="1">
    <source>
        <dbReference type="HAMAP-Rule" id="MF_00518"/>
    </source>
</evidence>
<sequence>MIALIQRVSDARVTVAGENIGQIGPGLLVLLGVEKEDDEAKCKRLAQRVLAYRIFADGDDKMNLNVQQAGGKILVISQFTLAAQTNKGNRPGFSKGAEPIEAKRLYKLFNKNCSEMGIKVETGEFAADMQVSSTNDGPVTFWLQI</sequence>
<protein>
    <recommendedName>
        <fullName evidence="1">D-aminoacyl-tRNA deacylase</fullName>
        <shortName evidence="1">DTD</shortName>
        <ecNumber evidence="1">3.1.1.96</ecNumber>
    </recommendedName>
    <alternativeName>
        <fullName evidence="1">Gly-tRNA(Ala) deacylase</fullName>
    </alternativeName>
</protein>